<protein>
    <recommendedName>
        <fullName evidence="1">Holliday junction branch migration complex subunit RuvA</fullName>
    </recommendedName>
</protein>
<reference key="1">
    <citation type="journal article" date="2005" name="DNA Res.">
        <title>Complete genome sequence of the facultative anaerobic magnetotactic bacterium Magnetospirillum sp. strain AMB-1.</title>
        <authorList>
            <person name="Matsunaga T."/>
            <person name="Okamura Y."/>
            <person name="Fukuda Y."/>
            <person name="Wahyudi A.T."/>
            <person name="Murase Y."/>
            <person name="Takeyama H."/>
        </authorList>
    </citation>
    <scope>NUCLEOTIDE SEQUENCE [LARGE SCALE GENOMIC DNA]</scope>
    <source>
        <strain>ATCC 700264 / AMB-1</strain>
    </source>
</reference>
<keyword id="KW-0963">Cytoplasm</keyword>
<keyword id="KW-0227">DNA damage</keyword>
<keyword id="KW-0233">DNA recombination</keyword>
<keyword id="KW-0234">DNA repair</keyword>
<keyword id="KW-0238">DNA-binding</keyword>
<sequence length="212" mass="21931">MIAKLKGLIDSLGDDWAVVDCNGVGYLVACSSKTLARLETGTAAALFVETQVREDAISLFGFLETGERDWFRLLTTVQGVGAKVALAILSVASPDQLLQIIAAQDKAGLTRANGVGPKLAVRILTELKDKAGKIALGGFSPGGIKDALSASAPLPAASGRMEDAVSALVNLGYKRLEAFQAVGETARELGDEADSSALIRAALKHLGKGLLG</sequence>
<comment type="function">
    <text evidence="1">The RuvA-RuvB-RuvC complex processes Holliday junction (HJ) DNA during genetic recombination and DNA repair, while the RuvA-RuvB complex plays an important role in the rescue of blocked DNA replication forks via replication fork reversal (RFR). RuvA specifically binds to HJ cruciform DNA, conferring on it an open structure. The RuvB hexamer acts as an ATP-dependent pump, pulling dsDNA into and through the RuvAB complex. HJ branch migration allows RuvC to scan DNA until it finds its consensus sequence, where it cleaves and resolves the cruciform DNA.</text>
</comment>
<comment type="subunit">
    <text evidence="1">Homotetramer. Forms an RuvA(8)-RuvB(12)-Holliday junction (HJ) complex. HJ DNA is sandwiched between 2 RuvA tetramers; dsDNA enters through RuvA and exits via RuvB. An RuvB hexamer assembles on each DNA strand where it exits the tetramer. Each RuvB hexamer is contacted by two RuvA subunits (via domain III) on 2 adjacent RuvB subunits; this complex drives branch migration. In the full resolvosome a probable DNA-RuvA(4)-RuvB(12)-RuvC(2) complex forms which resolves the HJ.</text>
</comment>
<comment type="subcellular location">
    <subcellularLocation>
        <location evidence="1">Cytoplasm</location>
    </subcellularLocation>
</comment>
<comment type="domain">
    <text evidence="1">Has three domains with a flexible linker between the domains II and III and assumes an 'L' shape. Domain III is highly mobile and contacts RuvB.</text>
</comment>
<comment type="similarity">
    <text evidence="1">Belongs to the RuvA family.</text>
</comment>
<accession>Q2W2A3</accession>
<feature type="chain" id="PRO_1000002479" description="Holliday junction branch migration complex subunit RuvA">
    <location>
        <begin position="1"/>
        <end position="212"/>
    </location>
</feature>
<feature type="region of interest" description="Domain I" evidence="1">
    <location>
        <begin position="1"/>
        <end position="63"/>
    </location>
</feature>
<feature type="region of interest" description="Domain II" evidence="1">
    <location>
        <begin position="64"/>
        <end position="142"/>
    </location>
</feature>
<feature type="region of interest" description="Flexible linker" evidence="1">
    <location>
        <begin position="143"/>
        <end position="155"/>
    </location>
</feature>
<feature type="region of interest" description="Domain III" evidence="1">
    <location>
        <begin position="156"/>
        <end position="212"/>
    </location>
</feature>
<evidence type="ECO:0000255" key="1">
    <source>
        <dbReference type="HAMAP-Rule" id="MF_00031"/>
    </source>
</evidence>
<proteinExistence type="inferred from homology"/>
<dbReference type="EMBL" id="AP007255">
    <property type="protein sequence ID" value="BAE52022.1"/>
    <property type="molecule type" value="Genomic_DNA"/>
</dbReference>
<dbReference type="RefSeq" id="WP_011385583.1">
    <property type="nucleotide sequence ID" value="NC_007626.1"/>
</dbReference>
<dbReference type="SMR" id="Q2W2A3"/>
<dbReference type="STRING" id="342108.amb3218"/>
<dbReference type="KEGG" id="mag:amb3218"/>
<dbReference type="HOGENOM" id="CLU_087936_3_0_5"/>
<dbReference type="OrthoDB" id="5293449at2"/>
<dbReference type="Proteomes" id="UP000007058">
    <property type="component" value="Chromosome"/>
</dbReference>
<dbReference type="GO" id="GO:0005737">
    <property type="term" value="C:cytoplasm"/>
    <property type="evidence" value="ECO:0007669"/>
    <property type="project" value="UniProtKB-SubCell"/>
</dbReference>
<dbReference type="GO" id="GO:0009379">
    <property type="term" value="C:Holliday junction helicase complex"/>
    <property type="evidence" value="ECO:0007669"/>
    <property type="project" value="InterPro"/>
</dbReference>
<dbReference type="GO" id="GO:0048476">
    <property type="term" value="C:Holliday junction resolvase complex"/>
    <property type="evidence" value="ECO:0007669"/>
    <property type="project" value="UniProtKB-UniRule"/>
</dbReference>
<dbReference type="GO" id="GO:0005524">
    <property type="term" value="F:ATP binding"/>
    <property type="evidence" value="ECO:0007669"/>
    <property type="project" value="InterPro"/>
</dbReference>
<dbReference type="GO" id="GO:0000400">
    <property type="term" value="F:four-way junction DNA binding"/>
    <property type="evidence" value="ECO:0007669"/>
    <property type="project" value="UniProtKB-UniRule"/>
</dbReference>
<dbReference type="GO" id="GO:0009378">
    <property type="term" value="F:four-way junction helicase activity"/>
    <property type="evidence" value="ECO:0007669"/>
    <property type="project" value="InterPro"/>
</dbReference>
<dbReference type="GO" id="GO:0006310">
    <property type="term" value="P:DNA recombination"/>
    <property type="evidence" value="ECO:0007669"/>
    <property type="project" value="UniProtKB-UniRule"/>
</dbReference>
<dbReference type="GO" id="GO:0006281">
    <property type="term" value="P:DNA repair"/>
    <property type="evidence" value="ECO:0007669"/>
    <property type="project" value="UniProtKB-UniRule"/>
</dbReference>
<dbReference type="CDD" id="cd14332">
    <property type="entry name" value="UBA_RuvA_C"/>
    <property type="match status" value="1"/>
</dbReference>
<dbReference type="Gene3D" id="1.10.150.20">
    <property type="entry name" value="5' to 3' exonuclease, C-terminal subdomain"/>
    <property type="match status" value="1"/>
</dbReference>
<dbReference type="Gene3D" id="1.10.8.10">
    <property type="entry name" value="DNA helicase RuvA subunit, C-terminal domain"/>
    <property type="match status" value="1"/>
</dbReference>
<dbReference type="Gene3D" id="2.40.50.140">
    <property type="entry name" value="Nucleic acid-binding proteins"/>
    <property type="match status" value="1"/>
</dbReference>
<dbReference type="HAMAP" id="MF_00031">
    <property type="entry name" value="DNA_HJ_migration_RuvA"/>
    <property type="match status" value="1"/>
</dbReference>
<dbReference type="InterPro" id="IPR013849">
    <property type="entry name" value="DNA_helicase_Holl-junc_RuvA_I"/>
</dbReference>
<dbReference type="InterPro" id="IPR012340">
    <property type="entry name" value="NA-bd_OB-fold"/>
</dbReference>
<dbReference type="InterPro" id="IPR000085">
    <property type="entry name" value="RuvA"/>
</dbReference>
<dbReference type="InterPro" id="IPR010994">
    <property type="entry name" value="RuvA_2-like"/>
</dbReference>
<dbReference type="InterPro" id="IPR011114">
    <property type="entry name" value="RuvA_C"/>
</dbReference>
<dbReference type="InterPro" id="IPR036267">
    <property type="entry name" value="RuvA_C_sf"/>
</dbReference>
<dbReference type="NCBIfam" id="TIGR00084">
    <property type="entry name" value="ruvA"/>
    <property type="match status" value="1"/>
</dbReference>
<dbReference type="Pfam" id="PF14520">
    <property type="entry name" value="HHH_5"/>
    <property type="match status" value="1"/>
</dbReference>
<dbReference type="Pfam" id="PF07499">
    <property type="entry name" value="RuvA_C"/>
    <property type="match status" value="1"/>
</dbReference>
<dbReference type="Pfam" id="PF01330">
    <property type="entry name" value="RuvA_N"/>
    <property type="match status" value="1"/>
</dbReference>
<dbReference type="SUPFAM" id="SSF46929">
    <property type="entry name" value="DNA helicase RuvA subunit, C-terminal domain"/>
    <property type="match status" value="1"/>
</dbReference>
<dbReference type="SUPFAM" id="SSF50249">
    <property type="entry name" value="Nucleic acid-binding proteins"/>
    <property type="match status" value="1"/>
</dbReference>
<dbReference type="SUPFAM" id="SSF47781">
    <property type="entry name" value="RuvA domain 2-like"/>
    <property type="match status" value="1"/>
</dbReference>
<name>RUVA_PARM1</name>
<organism>
    <name type="scientific">Paramagnetospirillum magneticum (strain ATCC 700264 / AMB-1)</name>
    <name type="common">Magnetospirillum magneticum</name>
    <dbReference type="NCBI Taxonomy" id="342108"/>
    <lineage>
        <taxon>Bacteria</taxon>
        <taxon>Pseudomonadati</taxon>
        <taxon>Pseudomonadota</taxon>
        <taxon>Alphaproteobacteria</taxon>
        <taxon>Rhodospirillales</taxon>
        <taxon>Magnetospirillaceae</taxon>
        <taxon>Paramagnetospirillum</taxon>
    </lineage>
</organism>
<gene>
    <name evidence="1" type="primary">ruvA</name>
    <name type="ordered locus">amb3218</name>
</gene>